<proteinExistence type="inferred from homology"/>
<name>RUVA_METC4</name>
<keyword id="KW-0963">Cytoplasm</keyword>
<keyword id="KW-0227">DNA damage</keyword>
<keyword id="KW-0233">DNA recombination</keyword>
<keyword id="KW-0234">DNA repair</keyword>
<keyword id="KW-0238">DNA-binding</keyword>
<organism>
    <name type="scientific">Methylorubrum extorquens (strain CM4 / NCIMB 13688)</name>
    <name type="common">Methylobacterium extorquens</name>
    <dbReference type="NCBI Taxonomy" id="440085"/>
    <lineage>
        <taxon>Bacteria</taxon>
        <taxon>Pseudomonadati</taxon>
        <taxon>Pseudomonadota</taxon>
        <taxon>Alphaproteobacteria</taxon>
        <taxon>Hyphomicrobiales</taxon>
        <taxon>Methylobacteriaceae</taxon>
        <taxon>Methylorubrum</taxon>
    </lineage>
</organism>
<comment type="function">
    <text evidence="1">The RuvA-RuvB-RuvC complex processes Holliday junction (HJ) DNA during genetic recombination and DNA repair, while the RuvA-RuvB complex plays an important role in the rescue of blocked DNA replication forks via replication fork reversal (RFR). RuvA specifically binds to HJ cruciform DNA, conferring on it an open structure. The RuvB hexamer acts as an ATP-dependent pump, pulling dsDNA into and through the RuvAB complex. HJ branch migration allows RuvC to scan DNA until it finds its consensus sequence, where it cleaves and resolves the cruciform DNA.</text>
</comment>
<comment type="subunit">
    <text evidence="1">Homotetramer. Forms an RuvA(8)-RuvB(12)-Holliday junction (HJ) complex. HJ DNA is sandwiched between 2 RuvA tetramers; dsDNA enters through RuvA and exits via RuvB. An RuvB hexamer assembles on each DNA strand where it exits the tetramer. Each RuvB hexamer is contacted by two RuvA subunits (via domain III) on 2 adjacent RuvB subunits; this complex drives branch migration. In the full resolvosome a probable DNA-RuvA(4)-RuvB(12)-RuvC(2) complex forms which resolves the HJ.</text>
</comment>
<comment type="subcellular location">
    <subcellularLocation>
        <location evidence="1">Cytoplasm</location>
    </subcellularLocation>
</comment>
<comment type="domain">
    <text evidence="1">Has three domains with a flexible linker between the domains II and III and assumes an 'L' shape. Domain III is highly mobile and contacts RuvB.</text>
</comment>
<comment type="similarity">
    <text evidence="1">Belongs to the RuvA family.</text>
</comment>
<protein>
    <recommendedName>
        <fullName evidence="1">Holliday junction branch migration complex subunit RuvA</fullName>
    </recommendedName>
</protein>
<evidence type="ECO:0000255" key="1">
    <source>
        <dbReference type="HAMAP-Rule" id="MF_00031"/>
    </source>
</evidence>
<dbReference type="EMBL" id="CP001298">
    <property type="protein sequence ID" value="ACK81845.1"/>
    <property type="molecule type" value="Genomic_DNA"/>
</dbReference>
<dbReference type="RefSeq" id="WP_012252665.1">
    <property type="nucleotide sequence ID" value="NC_011757.1"/>
</dbReference>
<dbReference type="SMR" id="B7L255"/>
<dbReference type="KEGG" id="mch:Mchl_0928"/>
<dbReference type="HOGENOM" id="CLU_087936_3_0_5"/>
<dbReference type="Proteomes" id="UP000002385">
    <property type="component" value="Chromosome"/>
</dbReference>
<dbReference type="GO" id="GO:0005737">
    <property type="term" value="C:cytoplasm"/>
    <property type="evidence" value="ECO:0007669"/>
    <property type="project" value="UniProtKB-SubCell"/>
</dbReference>
<dbReference type="GO" id="GO:0009379">
    <property type="term" value="C:Holliday junction helicase complex"/>
    <property type="evidence" value="ECO:0007669"/>
    <property type="project" value="InterPro"/>
</dbReference>
<dbReference type="GO" id="GO:0048476">
    <property type="term" value="C:Holliday junction resolvase complex"/>
    <property type="evidence" value="ECO:0007669"/>
    <property type="project" value="UniProtKB-UniRule"/>
</dbReference>
<dbReference type="GO" id="GO:0005524">
    <property type="term" value="F:ATP binding"/>
    <property type="evidence" value="ECO:0007669"/>
    <property type="project" value="InterPro"/>
</dbReference>
<dbReference type="GO" id="GO:0000400">
    <property type="term" value="F:four-way junction DNA binding"/>
    <property type="evidence" value="ECO:0007669"/>
    <property type="project" value="UniProtKB-UniRule"/>
</dbReference>
<dbReference type="GO" id="GO:0009378">
    <property type="term" value="F:four-way junction helicase activity"/>
    <property type="evidence" value="ECO:0007669"/>
    <property type="project" value="InterPro"/>
</dbReference>
<dbReference type="GO" id="GO:0006310">
    <property type="term" value="P:DNA recombination"/>
    <property type="evidence" value="ECO:0007669"/>
    <property type="project" value="UniProtKB-UniRule"/>
</dbReference>
<dbReference type="GO" id="GO:0006281">
    <property type="term" value="P:DNA repair"/>
    <property type="evidence" value="ECO:0007669"/>
    <property type="project" value="UniProtKB-UniRule"/>
</dbReference>
<dbReference type="Gene3D" id="1.10.150.20">
    <property type="entry name" value="5' to 3' exonuclease, C-terminal subdomain"/>
    <property type="match status" value="1"/>
</dbReference>
<dbReference type="Gene3D" id="1.10.8.10">
    <property type="entry name" value="DNA helicase RuvA subunit, C-terminal domain"/>
    <property type="match status" value="1"/>
</dbReference>
<dbReference type="Gene3D" id="2.40.50.140">
    <property type="entry name" value="Nucleic acid-binding proteins"/>
    <property type="match status" value="1"/>
</dbReference>
<dbReference type="HAMAP" id="MF_00031">
    <property type="entry name" value="DNA_HJ_migration_RuvA"/>
    <property type="match status" value="1"/>
</dbReference>
<dbReference type="InterPro" id="IPR013849">
    <property type="entry name" value="DNA_helicase_Holl-junc_RuvA_I"/>
</dbReference>
<dbReference type="InterPro" id="IPR012340">
    <property type="entry name" value="NA-bd_OB-fold"/>
</dbReference>
<dbReference type="InterPro" id="IPR000085">
    <property type="entry name" value="RuvA"/>
</dbReference>
<dbReference type="InterPro" id="IPR010994">
    <property type="entry name" value="RuvA_2-like"/>
</dbReference>
<dbReference type="InterPro" id="IPR011114">
    <property type="entry name" value="RuvA_C"/>
</dbReference>
<dbReference type="InterPro" id="IPR036267">
    <property type="entry name" value="RuvA_C_sf"/>
</dbReference>
<dbReference type="NCBIfam" id="TIGR00084">
    <property type="entry name" value="ruvA"/>
    <property type="match status" value="1"/>
</dbReference>
<dbReference type="Pfam" id="PF14520">
    <property type="entry name" value="HHH_5"/>
    <property type="match status" value="1"/>
</dbReference>
<dbReference type="Pfam" id="PF07499">
    <property type="entry name" value="RuvA_C"/>
    <property type="match status" value="1"/>
</dbReference>
<dbReference type="Pfam" id="PF01330">
    <property type="entry name" value="RuvA_N"/>
    <property type="match status" value="1"/>
</dbReference>
<dbReference type="SUPFAM" id="SSF46929">
    <property type="entry name" value="DNA helicase RuvA subunit, C-terminal domain"/>
    <property type="match status" value="1"/>
</dbReference>
<dbReference type="SUPFAM" id="SSF50249">
    <property type="entry name" value="Nucleic acid-binding proteins"/>
    <property type="match status" value="1"/>
</dbReference>
<dbReference type="SUPFAM" id="SSF47781">
    <property type="entry name" value="RuvA domain 2-like"/>
    <property type="match status" value="1"/>
</dbReference>
<feature type="chain" id="PRO_1000195156" description="Holliday junction branch migration complex subunit RuvA">
    <location>
        <begin position="1"/>
        <end position="208"/>
    </location>
</feature>
<feature type="region of interest" description="Domain I" evidence="1">
    <location>
        <begin position="1"/>
        <end position="64"/>
    </location>
</feature>
<feature type="region of interest" description="Domain II" evidence="1">
    <location>
        <begin position="65"/>
        <end position="143"/>
    </location>
</feature>
<feature type="region of interest" description="Flexible linker" evidence="1">
    <location>
        <begin position="144"/>
        <end position="152"/>
    </location>
</feature>
<feature type="region of interest" description="Domain III" evidence="1">
    <location>
        <begin position="153"/>
        <end position="208"/>
    </location>
</feature>
<reference key="1">
    <citation type="submission" date="2008-12" db="EMBL/GenBank/DDBJ databases">
        <title>Complete sequence of chromosome of Methylobacterium chloromethanicum CM4.</title>
        <authorList>
            <consortium name="US DOE Joint Genome Institute"/>
            <person name="Lucas S."/>
            <person name="Copeland A."/>
            <person name="Lapidus A."/>
            <person name="Glavina del Rio T."/>
            <person name="Dalin E."/>
            <person name="Tice H."/>
            <person name="Bruce D."/>
            <person name="Goodwin L."/>
            <person name="Pitluck S."/>
            <person name="Chertkov O."/>
            <person name="Brettin T."/>
            <person name="Detter J.C."/>
            <person name="Han C."/>
            <person name="Larimer F."/>
            <person name="Land M."/>
            <person name="Hauser L."/>
            <person name="Kyrpides N."/>
            <person name="Mikhailova N."/>
            <person name="Marx C."/>
            <person name="Richardson P."/>
        </authorList>
    </citation>
    <scope>NUCLEOTIDE SEQUENCE [LARGE SCALE GENOMIC DNA]</scope>
    <source>
        <strain>CM4 / NCIMB 13688</strain>
    </source>
</reference>
<sequence length="208" mass="21840">MIGKLKGIVDSYGEDFVILDVNGVGYVVHCSARTLQRLPKPGEATDLAIETHVREDMIRLYGFRVDAEREWFRLLQTVQGVGTRVALGVLSVLEPAQLATAIATGDKGAVARAPGVGPRLAARLVAELKDKAPAFAPIDPALIALTGAVEDRTAPQPVADAISALVNLGYAQIQASAAIAAALKGLGEEAGTVEAKTLIRLGLRELAR</sequence>
<accession>B7L255</accession>
<gene>
    <name evidence="1" type="primary">ruvA</name>
    <name type="ordered locus">Mchl_0928</name>
</gene>